<feature type="chain" id="PRO_1000082439" description="GMP reductase">
    <location>
        <begin position="1"/>
        <end position="347"/>
    </location>
</feature>
<feature type="active site" description="Thioimidate intermediate" evidence="1">
    <location>
        <position position="186"/>
    </location>
</feature>
<feature type="binding site" evidence="1">
    <location>
        <begin position="108"/>
        <end position="131"/>
    </location>
    <ligand>
        <name>NADP(+)</name>
        <dbReference type="ChEBI" id="CHEBI:58349"/>
    </ligand>
</feature>
<feature type="binding site" evidence="1">
    <location>
        <position position="181"/>
    </location>
    <ligand>
        <name>K(+)</name>
        <dbReference type="ChEBI" id="CHEBI:29103"/>
    </ligand>
</feature>
<feature type="binding site" evidence="1">
    <location>
        <position position="183"/>
    </location>
    <ligand>
        <name>K(+)</name>
        <dbReference type="ChEBI" id="CHEBI:29103"/>
    </ligand>
</feature>
<feature type="binding site" evidence="1">
    <location>
        <begin position="216"/>
        <end position="239"/>
    </location>
    <ligand>
        <name>NADP(+)</name>
        <dbReference type="ChEBI" id="CHEBI:58349"/>
    </ligand>
</feature>
<name>GUAC_SALAR</name>
<protein>
    <recommendedName>
        <fullName evidence="1">GMP reductase</fullName>
        <ecNumber evidence="1">1.7.1.7</ecNumber>
    </recommendedName>
    <alternativeName>
        <fullName evidence="1">Guanosine 5'-monophosphate oxidoreductase</fullName>
        <shortName evidence="1">Guanosine monophosphate reductase</shortName>
    </alternativeName>
</protein>
<gene>
    <name evidence="1" type="primary">guaC</name>
    <name type="ordered locus">SARI_02854</name>
</gene>
<accession>A9MQA3</accession>
<reference key="1">
    <citation type="submission" date="2007-11" db="EMBL/GenBank/DDBJ databases">
        <authorList>
            <consortium name="The Salmonella enterica serovar Arizonae Genome Sequencing Project"/>
            <person name="McClelland M."/>
            <person name="Sanderson E.K."/>
            <person name="Porwollik S."/>
            <person name="Spieth J."/>
            <person name="Clifton W.S."/>
            <person name="Fulton R."/>
            <person name="Chunyan W."/>
            <person name="Wollam A."/>
            <person name="Shah N."/>
            <person name="Pepin K."/>
            <person name="Bhonagiri V."/>
            <person name="Nash W."/>
            <person name="Johnson M."/>
            <person name="Thiruvilangam P."/>
            <person name="Wilson R."/>
        </authorList>
    </citation>
    <scope>NUCLEOTIDE SEQUENCE [LARGE SCALE GENOMIC DNA]</scope>
    <source>
        <strain>ATCC BAA-731 / CDC346-86 / RSK2980</strain>
    </source>
</reference>
<evidence type="ECO:0000255" key="1">
    <source>
        <dbReference type="HAMAP-Rule" id="MF_00596"/>
    </source>
</evidence>
<dbReference type="EC" id="1.7.1.7" evidence="1"/>
<dbReference type="EMBL" id="CP000880">
    <property type="protein sequence ID" value="ABX22701.1"/>
    <property type="molecule type" value="Genomic_DNA"/>
</dbReference>
<dbReference type="SMR" id="A9MQA3"/>
<dbReference type="STRING" id="41514.SARI_02854"/>
<dbReference type="KEGG" id="ses:SARI_02854"/>
<dbReference type="HOGENOM" id="CLU_022552_5_3_6"/>
<dbReference type="Proteomes" id="UP000002084">
    <property type="component" value="Chromosome"/>
</dbReference>
<dbReference type="GO" id="GO:0005829">
    <property type="term" value="C:cytosol"/>
    <property type="evidence" value="ECO:0007669"/>
    <property type="project" value="TreeGrafter"/>
</dbReference>
<dbReference type="GO" id="GO:1902560">
    <property type="term" value="C:GMP reductase complex"/>
    <property type="evidence" value="ECO:0007669"/>
    <property type="project" value="InterPro"/>
</dbReference>
<dbReference type="GO" id="GO:0003920">
    <property type="term" value="F:GMP reductase activity"/>
    <property type="evidence" value="ECO:0007669"/>
    <property type="project" value="UniProtKB-UniRule"/>
</dbReference>
<dbReference type="GO" id="GO:0046872">
    <property type="term" value="F:metal ion binding"/>
    <property type="evidence" value="ECO:0007669"/>
    <property type="project" value="UniProtKB-KW"/>
</dbReference>
<dbReference type="GO" id="GO:0006163">
    <property type="term" value="P:purine nucleotide metabolic process"/>
    <property type="evidence" value="ECO:0007669"/>
    <property type="project" value="UniProtKB-UniRule"/>
</dbReference>
<dbReference type="CDD" id="cd00381">
    <property type="entry name" value="IMPDH"/>
    <property type="match status" value="1"/>
</dbReference>
<dbReference type="FunFam" id="3.20.20.70:FF:000012">
    <property type="entry name" value="GMP reductase"/>
    <property type="match status" value="1"/>
</dbReference>
<dbReference type="Gene3D" id="3.20.20.70">
    <property type="entry name" value="Aldolase class I"/>
    <property type="match status" value="1"/>
</dbReference>
<dbReference type="HAMAP" id="MF_00596">
    <property type="entry name" value="GMP_reduct_type1"/>
    <property type="match status" value="1"/>
</dbReference>
<dbReference type="InterPro" id="IPR013785">
    <property type="entry name" value="Aldolase_TIM"/>
</dbReference>
<dbReference type="InterPro" id="IPR050139">
    <property type="entry name" value="GMP_reductase"/>
</dbReference>
<dbReference type="InterPro" id="IPR005993">
    <property type="entry name" value="GMPR"/>
</dbReference>
<dbReference type="InterPro" id="IPR015875">
    <property type="entry name" value="IMP_DH/GMP_Rdtase_CS"/>
</dbReference>
<dbReference type="InterPro" id="IPR001093">
    <property type="entry name" value="IMP_DH_GMPRt"/>
</dbReference>
<dbReference type="NCBIfam" id="TIGR01305">
    <property type="entry name" value="GMP_reduct_1"/>
    <property type="match status" value="1"/>
</dbReference>
<dbReference type="NCBIfam" id="NF003470">
    <property type="entry name" value="PRK05096.1"/>
    <property type="match status" value="1"/>
</dbReference>
<dbReference type="PANTHER" id="PTHR43170">
    <property type="entry name" value="GMP REDUCTASE"/>
    <property type="match status" value="1"/>
</dbReference>
<dbReference type="PANTHER" id="PTHR43170:SF5">
    <property type="entry name" value="GMP REDUCTASE"/>
    <property type="match status" value="1"/>
</dbReference>
<dbReference type="Pfam" id="PF00478">
    <property type="entry name" value="IMPDH"/>
    <property type="match status" value="1"/>
</dbReference>
<dbReference type="PIRSF" id="PIRSF000235">
    <property type="entry name" value="GMP_reductase"/>
    <property type="match status" value="1"/>
</dbReference>
<dbReference type="SMART" id="SM01240">
    <property type="entry name" value="IMPDH"/>
    <property type="match status" value="1"/>
</dbReference>
<dbReference type="SUPFAM" id="SSF51412">
    <property type="entry name" value="Inosine monophosphate dehydrogenase (IMPDH)"/>
    <property type="match status" value="1"/>
</dbReference>
<dbReference type="PROSITE" id="PS00487">
    <property type="entry name" value="IMP_DH_GMP_RED"/>
    <property type="match status" value="1"/>
</dbReference>
<organism>
    <name type="scientific">Salmonella arizonae (strain ATCC BAA-731 / CDC346-86 / RSK2980)</name>
    <dbReference type="NCBI Taxonomy" id="41514"/>
    <lineage>
        <taxon>Bacteria</taxon>
        <taxon>Pseudomonadati</taxon>
        <taxon>Pseudomonadota</taxon>
        <taxon>Gammaproteobacteria</taxon>
        <taxon>Enterobacterales</taxon>
        <taxon>Enterobacteriaceae</taxon>
        <taxon>Salmonella</taxon>
    </lineage>
</organism>
<sequence length="347" mass="37079">MRIEEDLKLGFKDVLIRPKRSTLKSRSDVELERQFTFKHSGQTWSGVPIIAANMDTVGTFEMAQALAGFDILTAVHKHYTVEEWAAFINTASADVLKHVMVSTGTSDADFAKTAQILALNPALNFVCIDVANGYSEHFVQFVAKAREAWPTKTICAGNVVTGEMCEELILSGADIVKVGIGPGSVCTTRVKTGVGYPQLSAVIECADAAHGLGGMIVSDGGCTMPGDVAKAFGGGADFVMLGGMLAGHEESGGSVVEENGEKFMLFYGMSSESAMNRHVGGVAKYRAAEGKTVKLPLRGPVGNTARDILGGLRSACTYVGASRLKELTKRTTFIRVQEQENRIFNNL</sequence>
<keyword id="KW-0479">Metal-binding</keyword>
<keyword id="KW-0521">NADP</keyword>
<keyword id="KW-0560">Oxidoreductase</keyword>
<keyword id="KW-0630">Potassium</keyword>
<keyword id="KW-1185">Reference proteome</keyword>
<comment type="function">
    <text evidence="1">Catalyzes the irreversible NADPH-dependent deamination of GMP to IMP. It functions in the conversion of nucleobase, nucleoside and nucleotide derivatives of G to A nucleotides, and in maintaining the intracellular balance of A and G nucleotides.</text>
</comment>
<comment type="catalytic activity">
    <reaction evidence="1">
        <text>IMP + NH4(+) + NADP(+) = GMP + NADPH + 2 H(+)</text>
        <dbReference type="Rhea" id="RHEA:17185"/>
        <dbReference type="ChEBI" id="CHEBI:15378"/>
        <dbReference type="ChEBI" id="CHEBI:28938"/>
        <dbReference type="ChEBI" id="CHEBI:57783"/>
        <dbReference type="ChEBI" id="CHEBI:58053"/>
        <dbReference type="ChEBI" id="CHEBI:58115"/>
        <dbReference type="ChEBI" id="CHEBI:58349"/>
        <dbReference type="EC" id="1.7.1.7"/>
    </reaction>
</comment>
<comment type="subunit">
    <text evidence="1">Homotetramer.</text>
</comment>
<comment type="similarity">
    <text evidence="1">Belongs to the IMPDH/GMPR family. GuaC type 1 subfamily.</text>
</comment>
<proteinExistence type="inferred from homology"/>